<organism>
    <name type="scientific">Myxococcus xanthus</name>
    <dbReference type="NCBI Taxonomy" id="34"/>
    <lineage>
        <taxon>Bacteria</taxon>
        <taxon>Pseudomonadati</taxon>
        <taxon>Myxococcota</taxon>
        <taxon>Myxococcia</taxon>
        <taxon>Myxococcales</taxon>
        <taxon>Cystobacterineae</taxon>
        <taxon>Myxococcaceae</taxon>
        <taxon>Myxococcus</taxon>
    </lineage>
</organism>
<evidence type="ECO:0000255" key="1">
    <source>
        <dbReference type="HAMAP-Rule" id="MF_01217"/>
    </source>
</evidence>
<evidence type="ECO:0000255" key="2">
    <source>
        <dbReference type="PROSITE-ProRule" id="PRU00258"/>
    </source>
</evidence>
<evidence type="ECO:0000269" key="3">
    <source>
    </source>
</evidence>
<comment type="function">
    <text>Carrier of the growing fatty acid chain in fatty acid biosynthesis.</text>
</comment>
<comment type="pathway">
    <text evidence="1">Lipid metabolism; fatty acid biosynthesis.</text>
</comment>
<comment type="subcellular location">
    <subcellularLocation>
        <location evidence="1">Cytoplasm</location>
    </subcellularLocation>
</comment>
<comment type="PTM">
    <text>4'-phosphopantetheine is transferred from CoA to a specific serine of apo-ACP by AcpS. This modification is essential for activity because fatty acids are bound in thioester linkage to the sulfhydryl of the prosthetic group.</text>
</comment>
<comment type="similarity">
    <text evidence="1">Belongs to the acyl carrier protein (ACP) family.</text>
</comment>
<sequence length="79" mass="8584">MASKEEILAGLAEIVNEETGLDTAEVQPEKSFTDDLDIDSISMMTIVVNAEDKFGVKIPDEEVKNLKTVQDAVDFIXGA</sequence>
<keyword id="KW-0963">Cytoplasm</keyword>
<keyword id="KW-0903">Direct protein sequencing</keyword>
<keyword id="KW-0275">Fatty acid biosynthesis</keyword>
<keyword id="KW-0276">Fatty acid metabolism</keyword>
<keyword id="KW-0444">Lipid biosynthesis</keyword>
<keyword id="KW-0443">Lipid metabolism</keyword>
<keyword id="KW-0596">Phosphopantetheine</keyword>
<keyword id="KW-0597">Phosphoprotein</keyword>
<protein>
    <recommendedName>
        <fullName evidence="1">Acyl carrier protein</fullName>
        <shortName evidence="1">ACP</shortName>
    </recommendedName>
</protein>
<name>ACP_MYXXA</name>
<gene>
    <name evidence="1" type="primary">acpP</name>
</gene>
<proteinExistence type="evidence at protein level"/>
<feature type="initiator methionine" description="Removed" evidence="3">
    <location>
        <position position="1"/>
    </location>
</feature>
<feature type="chain" id="PRO_0000180155" description="Acyl carrier protein">
    <location>
        <begin position="2"/>
        <end position="79"/>
    </location>
</feature>
<feature type="domain" description="Carrier" evidence="2">
    <location>
        <begin position="2"/>
        <end position="79"/>
    </location>
</feature>
<feature type="modified residue" description="O-(pantetheine 4'-phosphoryl)serine" evidence="2 3">
    <location>
        <position position="40"/>
    </location>
</feature>
<accession>P80921</accession>
<dbReference type="UniPathway" id="UPA00094"/>
<dbReference type="GO" id="GO:0005829">
    <property type="term" value="C:cytosol"/>
    <property type="evidence" value="ECO:0007669"/>
    <property type="project" value="TreeGrafter"/>
</dbReference>
<dbReference type="GO" id="GO:0016020">
    <property type="term" value="C:membrane"/>
    <property type="evidence" value="ECO:0007669"/>
    <property type="project" value="GOC"/>
</dbReference>
<dbReference type="GO" id="GO:0000035">
    <property type="term" value="F:acyl binding"/>
    <property type="evidence" value="ECO:0007669"/>
    <property type="project" value="TreeGrafter"/>
</dbReference>
<dbReference type="GO" id="GO:0000036">
    <property type="term" value="F:acyl carrier activity"/>
    <property type="evidence" value="ECO:0007669"/>
    <property type="project" value="UniProtKB-UniRule"/>
</dbReference>
<dbReference type="GO" id="GO:0009245">
    <property type="term" value="P:lipid A biosynthetic process"/>
    <property type="evidence" value="ECO:0007669"/>
    <property type="project" value="TreeGrafter"/>
</dbReference>
<dbReference type="Gene3D" id="1.10.1200.10">
    <property type="entry name" value="ACP-like"/>
    <property type="match status" value="1"/>
</dbReference>
<dbReference type="HAMAP" id="MF_01217">
    <property type="entry name" value="Acyl_carrier"/>
    <property type="match status" value="1"/>
</dbReference>
<dbReference type="InterPro" id="IPR003231">
    <property type="entry name" value="ACP"/>
</dbReference>
<dbReference type="InterPro" id="IPR036736">
    <property type="entry name" value="ACP-like_sf"/>
</dbReference>
<dbReference type="InterPro" id="IPR009081">
    <property type="entry name" value="PP-bd_ACP"/>
</dbReference>
<dbReference type="NCBIfam" id="NF002147">
    <property type="entry name" value="PRK00982.1-1"/>
    <property type="match status" value="1"/>
</dbReference>
<dbReference type="NCBIfam" id="NF002148">
    <property type="entry name" value="PRK00982.1-2"/>
    <property type="match status" value="1"/>
</dbReference>
<dbReference type="NCBIfam" id="NF002150">
    <property type="entry name" value="PRK00982.1-4"/>
    <property type="match status" value="1"/>
</dbReference>
<dbReference type="PANTHER" id="PTHR20863">
    <property type="entry name" value="ACYL CARRIER PROTEIN"/>
    <property type="match status" value="1"/>
</dbReference>
<dbReference type="PANTHER" id="PTHR20863:SF76">
    <property type="entry name" value="CARRIER DOMAIN-CONTAINING PROTEIN"/>
    <property type="match status" value="1"/>
</dbReference>
<dbReference type="Pfam" id="PF00550">
    <property type="entry name" value="PP-binding"/>
    <property type="match status" value="1"/>
</dbReference>
<dbReference type="SUPFAM" id="SSF47336">
    <property type="entry name" value="ACP-like"/>
    <property type="match status" value="1"/>
</dbReference>
<dbReference type="PROSITE" id="PS50075">
    <property type="entry name" value="CARRIER"/>
    <property type="match status" value="1"/>
</dbReference>
<reference key="1">
    <citation type="journal article" date="1997" name="J. Bacteriol.">
        <title>Domains of Escherichia coli acyl carrier protein important for membrane-derived-oligosaccharide biosynthesis.</title>
        <authorList>
            <person name="Tang L."/>
            <person name="Weissborn A.C."/>
            <person name="Kennedy E.P."/>
        </authorList>
    </citation>
    <scope>PROTEIN SEQUENCE OF 2-79</scope>
    <scope>PHOSPHOPANTETHEINYLATION AT SER-40</scope>
    <source>
        <strain>ATCC 25232 / DSM 16526 / CIP 107069 / KCTC 72774 / NBRC 13542 / NCIMB 9412 / FB</strain>
    </source>
</reference>